<reference key="1">
    <citation type="submission" date="2006-12" db="EMBL/GenBank/DDBJ databases">
        <title>Complete sequence of Chlorobium phaeobacteroides DSM 266.</title>
        <authorList>
            <consortium name="US DOE Joint Genome Institute"/>
            <person name="Copeland A."/>
            <person name="Lucas S."/>
            <person name="Lapidus A."/>
            <person name="Barry K."/>
            <person name="Detter J.C."/>
            <person name="Glavina del Rio T."/>
            <person name="Hammon N."/>
            <person name="Israni S."/>
            <person name="Pitluck S."/>
            <person name="Goltsman E."/>
            <person name="Schmutz J."/>
            <person name="Larimer F."/>
            <person name="Land M."/>
            <person name="Hauser L."/>
            <person name="Mikhailova N."/>
            <person name="Li T."/>
            <person name="Overmann J."/>
            <person name="Bryant D.A."/>
            <person name="Richardson P."/>
        </authorList>
    </citation>
    <scope>NUCLEOTIDE SEQUENCE [LARGE SCALE GENOMIC DNA]</scope>
    <source>
        <strain>DSM 266 / SMG 266 / 2430</strain>
    </source>
</reference>
<name>RL1_CHLPD</name>
<protein>
    <recommendedName>
        <fullName evidence="1">Large ribosomal subunit protein uL1</fullName>
    </recommendedName>
    <alternativeName>
        <fullName evidence="2">50S ribosomal protein L1</fullName>
    </alternativeName>
</protein>
<gene>
    <name evidence="1" type="primary">rplA</name>
    <name type="ordered locus">Cpha266_0230</name>
</gene>
<keyword id="KW-1185">Reference proteome</keyword>
<keyword id="KW-0678">Repressor</keyword>
<keyword id="KW-0687">Ribonucleoprotein</keyword>
<keyword id="KW-0689">Ribosomal protein</keyword>
<keyword id="KW-0694">RNA-binding</keyword>
<keyword id="KW-0699">rRNA-binding</keyword>
<keyword id="KW-0810">Translation regulation</keyword>
<keyword id="KW-0820">tRNA-binding</keyword>
<organism>
    <name type="scientific">Chlorobium phaeobacteroides (strain DSM 266 / SMG 266 / 2430)</name>
    <dbReference type="NCBI Taxonomy" id="290317"/>
    <lineage>
        <taxon>Bacteria</taxon>
        <taxon>Pseudomonadati</taxon>
        <taxon>Chlorobiota</taxon>
        <taxon>Chlorobiia</taxon>
        <taxon>Chlorobiales</taxon>
        <taxon>Chlorobiaceae</taxon>
        <taxon>Chlorobium/Pelodictyon group</taxon>
        <taxon>Chlorobium</taxon>
    </lineage>
</organism>
<dbReference type="EMBL" id="CP000492">
    <property type="protein sequence ID" value="ABL64297.1"/>
    <property type="molecule type" value="Genomic_DNA"/>
</dbReference>
<dbReference type="RefSeq" id="WP_011744137.1">
    <property type="nucleotide sequence ID" value="NC_008639.1"/>
</dbReference>
<dbReference type="SMR" id="A1BD20"/>
<dbReference type="STRING" id="290317.Cpha266_0230"/>
<dbReference type="KEGG" id="cph:Cpha266_0230"/>
<dbReference type="eggNOG" id="COG0081">
    <property type="taxonomic scope" value="Bacteria"/>
</dbReference>
<dbReference type="HOGENOM" id="CLU_062853_0_0_10"/>
<dbReference type="OrthoDB" id="9803740at2"/>
<dbReference type="Proteomes" id="UP000008701">
    <property type="component" value="Chromosome"/>
</dbReference>
<dbReference type="GO" id="GO:0015934">
    <property type="term" value="C:large ribosomal subunit"/>
    <property type="evidence" value="ECO:0007669"/>
    <property type="project" value="InterPro"/>
</dbReference>
<dbReference type="GO" id="GO:0019843">
    <property type="term" value="F:rRNA binding"/>
    <property type="evidence" value="ECO:0007669"/>
    <property type="project" value="UniProtKB-UniRule"/>
</dbReference>
<dbReference type="GO" id="GO:0003735">
    <property type="term" value="F:structural constituent of ribosome"/>
    <property type="evidence" value="ECO:0007669"/>
    <property type="project" value="InterPro"/>
</dbReference>
<dbReference type="GO" id="GO:0000049">
    <property type="term" value="F:tRNA binding"/>
    <property type="evidence" value="ECO:0007669"/>
    <property type="project" value="UniProtKB-KW"/>
</dbReference>
<dbReference type="GO" id="GO:0006417">
    <property type="term" value="P:regulation of translation"/>
    <property type="evidence" value="ECO:0007669"/>
    <property type="project" value="UniProtKB-KW"/>
</dbReference>
<dbReference type="GO" id="GO:0006412">
    <property type="term" value="P:translation"/>
    <property type="evidence" value="ECO:0007669"/>
    <property type="project" value="UniProtKB-UniRule"/>
</dbReference>
<dbReference type="CDD" id="cd00403">
    <property type="entry name" value="Ribosomal_L1"/>
    <property type="match status" value="1"/>
</dbReference>
<dbReference type="FunFam" id="3.40.50.790:FF:000001">
    <property type="entry name" value="50S ribosomal protein L1"/>
    <property type="match status" value="1"/>
</dbReference>
<dbReference type="Gene3D" id="3.30.190.20">
    <property type="match status" value="1"/>
</dbReference>
<dbReference type="Gene3D" id="3.40.50.790">
    <property type="match status" value="1"/>
</dbReference>
<dbReference type="HAMAP" id="MF_01318_B">
    <property type="entry name" value="Ribosomal_uL1_B"/>
    <property type="match status" value="1"/>
</dbReference>
<dbReference type="InterPro" id="IPR005878">
    <property type="entry name" value="Ribosom_uL1_bac-type"/>
</dbReference>
<dbReference type="InterPro" id="IPR002143">
    <property type="entry name" value="Ribosomal_uL1"/>
</dbReference>
<dbReference type="InterPro" id="IPR023674">
    <property type="entry name" value="Ribosomal_uL1-like"/>
</dbReference>
<dbReference type="InterPro" id="IPR028364">
    <property type="entry name" value="Ribosomal_uL1/biogenesis"/>
</dbReference>
<dbReference type="InterPro" id="IPR016095">
    <property type="entry name" value="Ribosomal_uL1_3-a/b-sand"/>
</dbReference>
<dbReference type="InterPro" id="IPR023673">
    <property type="entry name" value="Ribosomal_uL1_CS"/>
</dbReference>
<dbReference type="NCBIfam" id="TIGR01169">
    <property type="entry name" value="rplA_bact"/>
    <property type="match status" value="1"/>
</dbReference>
<dbReference type="PANTHER" id="PTHR36427">
    <property type="entry name" value="54S RIBOSOMAL PROTEIN L1, MITOCHONDRIAL"/>
    <property type="match status" value="1"/>
</dbReference>
<dbReference type="PANTHER" id="PTHR36427:SF3">
    <property type="entry name" value="LARGE RIBOSOMAL SUBUNIT PROTEIN UL1M"/>
    <property type="match status" value="1"/>
</dbReference>
<dbReference type="Pfam" id="PF00687">
    <property type="entry name" value="Ribosomal_L1"/>
    <property type="match status" value="1"/>
</dbReference>
<dbReference type="PIRSF" id="PIRSF002155">
    <property type="entry name" value="Ribosomal_L1"/>
    <property type="match status" value="1"/>
</dbReference>
<dbReference type="SUPFAM" id="SSF56808">
    <property type="entry name" value="Ribosomal protein L1"/>
    <property type="match status" value="1"/>
</dbReference>
<dbReference type="PROSITE" id="PS01199">
    <property type="entry name" value="RIBOSOMAL_L1"/>
    <property type="match status" value="1"/>
</dbReference>
<feature type="chain" id="PRO_0000307986" description="Large ribosomal subunit protein uL1">
    <location>
        <begin position="1"/>
        <end position="229"/>
    </location>
</feature>
<sequence>MAGKKYRDAVAKTDRFQEYDLVDAVEKIREITQVKFDATIDIAMKLGVDPRHADQVVRGTVMLPHGTGKTVSVLVVCKEAKAEEAVAAGADFVGFEEYVEKIQNGWTGVDVIIATPDVMGQLGKVAKILGPRGLMPNPKSGTVTMDVAKAVKEVKAGKIEFRVDKAGNVHAPVGKVSFQSEQLVENITSFLKEVVRLKPSAAKGQYVQGIALSSTMSPSVKVKREKFVA</sequence>
<comment type="function">
    <text evidence="1">Binds directly to 23S rRNA. The L1 stalk is quite mobile in the ribosome, and is involved in E site tRNA release.</text>
</comment>
<comment type="function">
    <text evidence="1">Protein L1 is also a translational repressor protein, it controls the translation of the L11 operon by binding to its mRNA.</text>
</comment>
<comment type="subunit">
    <text evidence="1">Part of the 50S ribosomal subunit.</text>
</comment>
<comment type="similarity">
    <text evidence="1">Belongs to the universal ribosomal protein uL1 family.</text>
</comment>
<accession>A1BD20</accession>
<evidence type="ECO:0000255" key="1">
    <source>
        <dbReference type="HAMAP-Rule" id="MF_01318"/>
    </source>
</evidence>
<evidence type="ECO:0000305" key="2"/>
<proteinExistence type="inferred from homology"/>